<organismHost>
    <name type="scientific">Homo sapiens</name>
    <name type="common">Human</name>
    <dbReference type="NCBI Taxonomy" id="9606"/>
</organismHost>
<keyword id="KW-0106">Calcium</keyword>
<keyword id="KW-0167">Capsid protein</keyword>
<keyword id="KW-1154">Intermediate capsid protein</keyword>
<keyword id="KW-0479">Metal-binding</keyword>
<keyword id="KW-0832">Ubl conjugation</keyword>
<keyword id="KW-0946">Virion</keyword>
<keyword id="KW-0862">Zinc</keyword>
<comment type="function">
    <text evidence="1">Intermediate capsid protein that self assembles to form an icosahedral capsid with a T=13 symmetry, which consists of 230 trimers of VP6, with channels at each of its five-fold vertices. This capsid constitutes the middle concentric layer of the viral mature particle. The innermost VP2 capsid and the intermediate VP6 capsid remain intact following cell entry to protect the dsRNA from degradation and to prevent unfavorable antiviral responses in the host cell during all the replication cycle of the virus. Nascent transcripts are transcribed within the structural confines of this double-layered particle (DLP) and are extruded through the channels at the five-fold axes. VP6 is required for the transcription activity of the DLP.</text>
</comment>
<comment type="subunit">
    <text evidence="1">Homotrimer. Interacts with the inner capsid protein VP2. Interacts with the outer capsid glycoprotein VP7. Interacts with the outer capsid protein VP5*.</text>
</comment>
<comment type="subcellular location">
    <subcellularLocation>
        <location evidence="1">Virion</location>
    </subcellularLocation>
    <text evidence="1">Component of the intermediate capsid. Also found in spherical cytoplasmic structures, called virus factories, that appear early after infection and are the site of viral replication and packaging.</text>
</comment>
<comment type="PTM">
    <text evidence="1">The N-terminus is blocked.</text>
</comment>
<comment type="PTM">
    <text evidence="1">Sumoylated with SUMO1 and SUMO2. Sumoylation of viral proteins seems to have a positive role on viral replication.</text>
</comment>
<comment type="miscellaneous">
    <text evidence="1">The VP6 trimer contains a zinc ion located at the center of the molecule. The zinc ion is not essential for either trimerization or transcription activity of the DLP. Zinc-depleted VP6 has an increased sensitivity to proteases.</text>
</comment>
<comment type="similarity">
    <text evidence="1">Belongs to the rotavirus VP6 family.</text>
</comment>
<evidence type="ECO:0000255" key="1">
    <source>
        <dbReference type="HAMAP-Rule" id="MF_04129"/>
    </source>
</evidence>
<proteinExistence type="inferred from homology"/>
<protein>
    <recommendedName>
        <fullName evidence="1">Intermediate capsid protein VP6</fullName>
    </recommendedName>
</protein>
<reference key="1">
    <citation type="journal article" date="2008" name="J. Virol.">
        <title>Full genome-based classification of rotaviruses reveals a common origin between human Wa-Like and porcine rotavirus strains and human DS-1-like and bovine rotavirus strains.</title>
        <authorList>
            <person name="Matthijnssens J."/>
            <person name="Ciarlet M."/>
            <person name="Heiman E.M."/>
            <person name="Arijs I."/>
            <person name="Delbeke T."/>
            <person name="McDonald S.M."/>
            <person name="Palombo E.A."/>
            <person name="Iturriza-Gomara M."/>
            <person name="Maes P."/>
            <person name="Patton J.T."/>
            <person name="Rahman M."/>
            <person name="Van Ranst M."/>
        </authorList>
    </citation>
    <scope>NUCLEOTIDE SEQUENCE [GENOMIC RNA]</scope>
</reference>
<name>VP6_ROTHD</name>
<sequence length="397" mass="44874">MDVLYSLSKTLKDARDKIVEGTLYSNVSDLIQQFNQMIITMNGNEFQTGGIGNLPTRNWSFDFGLLGTTLLNLDANYVETARNTIDYFVDFVDNVCMDEMVRESQRNGIAPQSESLRKLSGIKFKRINFDNSSEYIENWNLQNRRQRTGFTFHKPNIFPYSASFTLNRSQPAHDNLMGTMWLNAGSEIQVAGFDYSCAINAPANIQQFEHIVQLRRVLTTATITLLPDAERFSFPRVINSADGATTWYFNPVILRPNNVEVEFLLNGQIINTYQARFGTIVARNFDTIRLSFQLMRPPNMTPSVAALFPNAQPFEHHATVGLTLRIESAVCESVLADASETMLANVTSVRQEYAIPVGPVFPPGMNWTDLITNYSPSREDNLQRVFTVASIRSMLVK</sequence>
<organism>
    <name type="scientific">Rotavirus A (strain RVA/Human/United States/DS-1/1976/G2P1B[4])</name>
    <name type="common">RV-A</name>
    <name type="synonym">Rotavirus A (strain DS1)</name>
    <dbReference type="NCBI Taxonomy" id="10950"/>
    <lineage>
        <taxon>Viruses</taxon>
        <taxon>Riboviria</taxon>
        <taxon>Orthornavirae</taxon>
        <taxon>Duplornaviricota</taxon>
        <taxon>Resentoviricetes</taxon>
        <taxon>Reovirales</taxon>
        <taxon>Sedoreoviridae</taxon>
        <taxon>Rotavirus</taxon>
        <taxon>Rotavirus A</taxon>
    </lineage>
</organism>
<feature type="chain" id="PRO_0000375233" description="Intermediate capsid protein VP6">
    <location>
        <begin position="1"/>
        <end position="397"/>
    </location>
</feature>
<feature type="region of interest" description="Interaction with the inner capsid protein VP2" evidence="1">
    <location>
        <begin position="62"/>
        <end position="73"/>
    </location>
</feature>
<feature type="binding site" evidence="1">
    <location>
        <position position="153"/>
    </location>
    <ligand>
        <name>Zn(2+)</name>
        <dbReference type="ChEBI" id="CHEBI:29105"/>
        <note>ligand shared between all trimeric partners</note>
    </ligand>
</feature>
<feature type="binding site" evidence="1">
    <location>
        <position position="266"/>
    </location>
    <ligand>
        <name>Ca(2+)</name>
        <dbReference type="ChEBI" id="CHEBI:29108"/>
    </ligand>
</feature>
<feature type="binding site" evidence="1">
    <location>
        <position position="286"/>
    </location>
    <ligand>
        <name>Ca(2+)</name>
        <dbReference type="ChEBI" id="CHEBI:29108"/>
    </ligand>
</feature>
<accession>A7J3A8</accession>
<accession>B1NKS0</accession>
<dbReference type="EMBL" id="DQ870507">
    <property type="protein sequence ID" value="ABI58293.1"/>
    <property type="molecule type" value="Genomic_RNA"/>
</dbReference>
<dbReference type="EMBL" id="EF583028">
    <property type="protein sequence ID" value="ABU87837.1"/>
    <property type="molecule type" value="Genomic_RNA"/>
</dbReference>
<dbReference type="SMR" id="A7J3A8"/>
<dbReference type="Proteomes" id="UP000001457">
    <property type="component" value="Genome"/>
</dbReference>
<dbReference type="GO" id="GO:0019031">
    <property type="term" value="C:viral envelope"/>
    <property type="evidence" value="ECO:0007669"/>
    <property type="project" value="UniProtKB-UniRule"/>
</dbReference>
<dbReference type="GO" id="GO:0039626">
    <property type="term" value="C:viral intermediate capsid"/>
    <property type="evidence" value="ECO:0007669"/>
    <property type="project" value="UniProtKB-UniRule"/>
</dbReference>
<dbReference type="GO" id="GO:0046789">
    <property type="term" value="F:host cell surface receptor binding"/>
    <property type="evidence" value="ECO:0007669"/>
    <property type="project" value="UniProtKB-UniRule"/>
</dbReference>
<dbReference type="GO" id="GO:0046872">
    <property type="term" value="F:metal ion binding"/>
    <property type="evidence" value="ECO:0007669"/>
    <property type="project" value="UniProtKB-UniRule"/>
</dbReference>
<dbReference type="GO" id="GO:0005198">
    <property type="term" value="F:structural molecule activity"/>
    <property type="evidence" value="ECO:0007669"/>
    <property type="project" value="UniProtKB-UniRule"/>
</dbReference>
<dbReference type="GO" id="GO:0019064">
    <property type="term" value="P:fusion of virus membrane with host plasma membrane"/>
    <property type="evidence" value="ECO:0007669"/>
    <property type="project" value="UniProtKB-UniRule"/>
</dbReference>
<dbReference type="FunFam" id="2.60.120.170:FF:000001">
    <property type="entry name" value="Intermediate capsid protein VP6"/>
    <property type="match status" value="1"/>
</dbReference>
<dbReference type="Gene3D" id="2.60.120.170">
    <property type="match status" value="1"/>
</dbReference>
<dbReference type="Gene3D" id="1.10.1350.10">
    <property type="entry name" value="Viral capsid alpha domain"/>
    <property type="match status" value="1"/>
</dbReference>
<dbReference type="HAMAP" id="MF_04126">
    <property type="entry name" value="Rota_VP6"/>
    <property type="match status" value="1"/>
</dbReference>
<dbReference type="HAMAP" id="MF_04129">
    <property type="entry name" value="Rota_VP6_A"/>
    <property type="match status" value="1"/>
</dbReference>
<dbReference type="InterPro" id="IPR008980">
    <property type="entry name" value="Capsid_hemagglutn"/>
</dbReference>
<dbReference type="InterPro" id="IPR001385">
    <property type="entry name" value="Rotavirus_A/C_VP6"/>
</dbReference>
<dbReference type="InterPro" id="IPR008935">
    <property type="entry name" value="Virus_capsid_a-hlx_vir"/>
</dbReference>
<dbReference type="Pfam" id="PF00980">
    <property type="entry name" value="Rota_Capsid_VP6"/>
    <property type="match status" value="1"/>
</dbReference>
<dbReference type="SUPFAM" id="SSF48345">
    <property type="entry name" value="A virus capsid protein alpha-helical domain"/>
    <property type="match status" value="1"/>
</dbReference>
<dbReference type="SUPFAM" id="SSF49818">
    <property type="entry name" value="Viral protein domain"/>
    <property type="match status" value="1"/>
</dbReference>